<comment type="function">
    <text evidence="1">Specifically methylates the pseudouridine at position 1915 (m3Psi1915) in 23S rRNA.</text>
</comment>
<comment type="catalytic activity">
    <reaction evidence="1">
        <text>pseudouridine(1915) in 23S rRNA + S-adenosyl-L-methionine = N(3)-methylpseudouridine(1915) in 23S rRNA + S-adenosyl-L-homocysteine + H(+)</text>
        <dbReference type="Rhea" id="RHEA:42752"/>
        <dbReference type="Rhea" id="RHEA-COMP:10221"/>
        <dbReference type="Rhea" id="RHEA-COMP:10222"/>
        <dbReference type="ChEBI" id="CHEBI:15378"/>
        <dbReference type="ChEBI" id="CHEBI:57856"/>
        <dbReference type="ChEBI" id="CHEBI:59789"/>
        <dbReference type="ChEBI" id="CHEBI:65314"/>
        <dbReference type="ChEBI" id="CHEBI:74486"/>
        <dbReference type="EC" id="2.1.1.177"/>
    </reaction>
</comment>
<comment type="subunit">
    <text evidence="1">Homodimer.</text>
</comment>
<comment type="subcellular location">
    <subcellularLocation>
        <location evidence="1">Cytoplasm</location>
    </subcellularLocation>
</comment>
<comment type="similarity">
    <text evidence="1">Belongs to the RNA methyltransferase RlmH family.</text>
</comment>
<sequence length="144" mass="16379">MNPSRCRILAVGKVRRDWIQKGIELYLKRLPGLTVTELRDSSPEKEADSIRAALRPDETLIALMEQGECLGSIPFARRLKQFENERLVFVIGGADGLTAELKLQAQWQLSLSPLTFPHELARLMLVEQLFRAQSIVQGRPYHRA</sequence>
<organism>
    <name type="scientific">Synechococcus sp. (strain CC9902)</name>
    <dbReference type="NCBI Taxonomy" id="316279"/>
    <lineage>
        <taxon>Bacteria</taxon>
        <taxon>Bacillati</taxon>
        <taxon>Cyanobacteriota</taxon>
        <taxon>Cyanophyceae</taxon>
        <taxon>Synechococcales</taxon>
        <taxon>Synechococcaceae</taxon>
        <taxon>Synechococcus</taxon>
    </lineage>
</organism>
<accession>Q3AXE9</accession>
<proteinExistence type="inferred from homology"/>
<keyword id="KW-0963">Cytoplasm</keyword>
<keyword id="KW-0489">Methyltransferase</keyword>
<keyword id="KW-1185">Reference proteome</keyword>
<keyword id="KW-0698">rRNA processing</keyword>
<keyword id="KW-0949">S-adenosyl-L-methionine</keyword>
<keyword id="KW-0808">Transferase</keyword>
<name>RLMH_SYNS9</name>
<protein>
    <recommendedName>
        <fullName evidence="1">Ribosomal RNA large subunit methyltransferase H</fullName>
        <ecNumber evidence="1">2.1.1.177</ecNumber>
    </recommendedName>
    <alternativeName>
        <fullName evidence="1">23S rRNA (pseudouridine1915-N3)-methyltransferase</fullName>
    </alternativeName>
    <alternativeName>
        <fullName evidence="1">23S rRNA m3Psi1915 methyltransferase</fullName>
    </alternativeName>
    <alternativeName>
        <fullName evidence="1">rRNA (pseudouridine-N3-)-methyltransferase RlmH</fullName>
    </alternativeName>
</protein>
<gene>
    <name evidence="1" type="primary">rlmH</name>
    <name type="ordered locus">Syncc9902_1287</name>
</gene>
<feature type="chain" id="PRO_0000260624" description="Ribosomal RNA large subunit methyltransferase H">
    <location>
        <begin position="1"/>
        <end position="144"/>
    </location>
</feature>
<feature type="binding site" evidence="1">
    <location>
        <position position="63"/>
    </location>
    <ligand>
        <name>S-adenosyl-L-methionine</name>
        <dbReference type="ChEBI" id="CHEBI:59789"/>
    </ligand>
</feature>
<feature type="binding site" evidence="1">
    <location>
        <position position="92"/>
    </location>
    <ligand>
        <name>S-adenosyl-L-methionine</name>
        <dbReference type="ChEBI" id="CHEBI:59789"/>
    </ligand>
</feature>
<feature type="binding site" evidence="1">
    <location>
        <begin position="111"/>
        <end position="116"/>
    </location>
    <ligand>
        <name>S-adenosyl-L-methionine</name>
        <dbReference type="ChEBI" id="CHEBI:59789"/>
    </ligand>
</feature>
<reference key="1">
    <citation type="submission" date="2005-08" db="EMBL/GenBank/DDBJ databases">
        <title>Complete sequence of Synechococcus sp. CC9902.</title>
        <authorList>
            <person name="Copeland A."/>
            <person name="Lucas S."/>
            <person name="Lapidus A."/>
            <person name="Barry K."/>
            <person name="Detter J.C."/>
            <person name="Glavina T."/>
            <person name="Hammon N."/>
            <person name="Israni S."/>
            <person name="Pitluck S."/>
            <person name="Martinez M."/>
            <person name="Schmutz J."/>
            <person name="Larimer F."/>
            <person name="Land M."/>
            <person name="Kyrpides N."/>
            <person name="Ivanova N."/>
            <person name="Richardson P."/>
        </authorList>
    </citation>
    <scope>NUCLEOTIDE SEQUENCE [LARGE SCALE GENOMIC DNA]</scope>
    <source>
        <strain>CC9902</strain>
    </source>
</reference>
<dbReference type="EC" id="2.1.1.177" evidence="1"/>
<dbReference type="EMBL" id="CP000097">
    <property type="protein sequence ID" value="ABB26251.1"/>
    <property type="molecule type" value="Genomic_DNA"/>
</dbReference>
<dbReference type="RefSeq" id="WP_011360076.1">
    <property type="nucleotide sequence ID" value="NC_007513.1"/>
</dbReference>
<dbReference type="SMR" id="Q3AXE9"/>
<dbReference type="STRING" id="316279.Syncc9902_1287"/>
<dbReference type="KEGG" id="sye:Syncc9902_1287"/>
<dbReference type="eggNOG" id="COG1576">
    <property type="taxonomic scope" value="Bacteria"/>
</dbReference>
<dbReference type="HOGENOM" id="CLU_100552_1_0_3"/>
<dbReference type="OrthoDB" id="9806643at2"/>
<dbReference type="Proteomes" id="UP000002712">
    <property type="component" value="Chromosome"/>
</dbReference>
<dbReference type="GO" id="GO:0005737">
    <property type="term" value="C:cytoplasm"/>
    <property type="evidence" value="ECO:0007669"/>
    <property type="project" value="UniProtKB-SubCell"/>
</dbReference>
<dbReference type="GO" id="GO:0070038">
    <property type="term" value="F:rRNA (pseudouridine-N3-)-methyltransferase activity"/>
    <property type="evidence" value="ECO:0007669"/>
    <property type="project" value="UniProtKB-UniRule"/>
</dbReference>
<dbReference type="CDD" id="cd18081">
    <property type="entry name" value="RlmH-like"/>
    <property type="match status" value="1"/>
</dbReference>
<dbReference type="Gene3D" id="3.40.1280.10">
    <property type="match status" value="1"/>
</dbReference>
<dbReference type="HAMAP" id="MF_00658">
    <property type="entry name" value="23SrRNA_methyltr_H"/>
    <property type="match status" value="1"/>
</dbReference>
<dbReference type="InterPro" id="IPR029028">
    <property type="entry name" value="Alpha/beta_knot_MTases"/>
</dbReference>
<dbReference type="InterPro" id="IPR003742">
    <property type="entry name" value="RlmH-like"/>
</dbReference>
<dbReference type="InterPro" id="IPR029026">
    <property type="entry name" value="tRNA_m1G_MTases_N"/>
</dbReference>
<dbReference type="PANTHER" id="PTHR33603">
    <property type="entry name" value="METHYLTRANSFERASE"/>
    <property type="match status" value="1"/>
</dbReference>
<dbReference type="PANTHER" id="PTHR33603:SF1">
    <property type="entry name" value="RIBOSOMAL RNA LARGE SUBUNIT METHYLTRANSFERASE H"/>
    <property type="match status" value="1"/>
</dbReference>
<dbReference type="Pfam" id="PF02590">
    <property type="entry name" value="SPOUT_MTase"/>
    <property type="match status" value="1"/>
</dbReference>
<dbReference type="PIRSF" id="PIRSF004505">
    <property type="entry name" value="MT_bac"/>
    <property type="match status" value="1"/>
</dbReference>
<dbReference type="SUPFAM" id="SSF75217">
    <property type="entry name" value="alpha/beta knot"/>
    <property type="match status" value="1"/>
</dbReference>
<evidence type="ECO:0000255" key="1">
    <source>
        <dbReference type="HAMAP-Rule" id="MF_00658"/>
    </source>
</evidence>